<accession>Q02QV2</accession>
<gene>
    <name type="ordered locus">PA14_19330</name>
</gene>
<feature type="chain" id="PRO_1000045167" description="UPF0270 protein PA14_19330">
    <location>
        <begin position="1"/>
        <end position="76"/>
    </location>
</feature>
<reference key="1">
    <citation type="journal article" date="2006" name="Genome Biol.">
        <title>Genomic analysis reveals that Pseudomonas aeruginosa virulence is combinatorial.</title>
        <authorList>
            <person name="Lee D.G."/>
            <person name="Urbach J.M."/>
            <person name="Wu G."/>
            <person name="Liberati N.T."/>
            <person name="Feinbaum R.L."/>
            <person name="Miyata S."/>
            <person name="Diggins L.T."/>
            <person name="He J."/>
            <person name="Saucier M."/>
            <person name="Deziel E."/>
            <person name="Friedman L."/>
            <person name="Li L."/>
            <person name="Grills G."/>
            <person name="Montgomery K."/>
            <person name="Kucherlapati R."/>
            <person name="Rahme L.G."/>
            <person name="Ausubel F.M."/>
        </authorList>
    </citation>
    <scope>NUCLEOTIDE SEQUENCE [LARGE SCALE GENOMIC DNA]</scope>
    <source>
        <strain>UCBPP-PA14</strain>
    </source>
</reference>
<dbReference type="EMBL" id="CP000438">
    <property type="protein sequence ID" value="ABJ12719.1"/>
    <property type="molecule type" value="Genomic_DNA"/>
</dbReference>
<dbReference type="RefSeq" id="WP_003091959.1">
    <property type="nucleotide sequence ID" value="NZ_CP034244.1"/>
</dbReference>
<dbReference type="SMR" id="Q02QV2"/>
<dbReference type="KEGG" id="pau:PA14_19330"/>
<dbReference type="PseudoCAP" id="PA14_19330"/>
<dbReference type="HOGENOM" id="CLU_186759_2_0_6"/>
<dbReference type="BioCyc" id="PAER208963:G1G74-1590-MONOMER"/>
<dbReference type="Proteomes" id="UP000000653">
    <property type="component" value="Chromosome"/>
</dbReference>
<dbReference type="Gene3D" id="1.10.10.610">
    <property type="entry name" value="YehU-like"/>
    <property type="match status" value="1"/>
</dbReference>
<dbReference type="HAMAP" id="MF_00690">
    <property type="entry name" value="UPF0270"/>
    <property type="match status" value="1"/>
</dbReference>
<dbReference type="InterPro" id="IPR010648">
    <property type="entry name" value="UPF0270"/>
</dbReference>
<dbReference type="InterPro" id="IPR036685">
    <property type="entry name" value="YehU-like_sf"/>
</dbReference>
<dbReference type="NCBIfam" id="NF001441">
    <property type="entry name" value="PRK00304.1"/>
    <property type="match status" value="1"/>
</dbReference>
<dbReference type="Pfam" id="PF06794">
    <property type="entry name" value="UPF0270"/>
    <property type="match status" value="1"/>
</dbReference>
<dbReference type="PIRSF" id="PIRSF006169">
    <property type="entry name" value="UCP006169"/>
    <property type="match status" value="1"/>
</dbReference>
<dbReference type="SUPFAM" id="SSF118001">
    <property type="entry name" value="YehU-like"/>
    <property type="match status" value="1"/>
</dbReference>
<protein>
    <recommendedName>
        <fullName evidence="1">UPF0270 protein PA14_19330</fullName>
    </recommendedName>
</protein>
<sequence>MLIPHDLLEADTLNNLLEDFVTREGTDNGDETPLDVRVERARHALRRGEAVILFDPESQQCQLMLRSEVPAELLRD</sequence>
<evidence type="ECO:0000255" key="1">
    <source>
        <dbReference type="HAMAP-Rule" id="MF_00690"/>
    </source>
</evidence>
<comment type="similarity">
    <text evidence="1">Belongs to the UPF0270 family.</text>
</comment>
<organism>
    <name type="scientific">Pseudomonas aeruginosa (strain UCBPP-PA14)</name>
    <dbReference type="NCBI Taxonomy" id="208963"/>
    <lineage>
        <taxon>Bacteria</taxon>
        <taxon>Pseudomonadati</taxon>
        <taxon>Pseudomonadota</taxon>
        <taxon>Gammaproteobacteria</taxon>
        <taxon>Pseudomonadales</taxon>
        <taxon>Pseudomonadaceae</taxon>
        <taxon>Pseudomonas</taxon>
    </lineage>
</organism>
<name>Y1933_PSEAB</name>
<proteinExistence type="inferred from homology"/>